<organism>
    <name type="scientific">Thermotoga petrophila (strain ATCC BAA-488 / DSM 13995 / JCM 10881 / RKU-1)</name>
    <dbReference type="NCBI Taxonomy" id="390874"/>
    <lineage>
        <taxon>Bacteria</taxon>
        <taxon>Thermotogati</taxon>
        <taxon>Thermotogota</taxon>
        <taxon>Thermotogae</taxon>
        <taxon>Thermotogales</taxon>
        <taxon>Thermotogaceae</taxon>
        <taxon>Thermotoga</taxon>
    </lineage>
</organism>
<sequence>MKEYRPQEIEKKWQEVWEEKKVFYTPQRSEKPKYYALVMFPYPSGTLHVGHVKNYVIGDIVARYKRMRGYNVLHPFGYDAFGLPAENAAIEKGIHPEEWTRKNINTIRGQVKKLGISYDWSREIATCDEEYYKWTQWIFLQLYKNGLAYKKKAAVNWCPKCKTVLANEQVKDGKCERCGTSVTIRHLEQWFFKITDYAERLLNDLDKLTGWPEHVKTMQRNWIGKSTGAEIDFPVEGSDTKIRVFTTRPDTLWGVTFMALAPESPLVEELVLEEKKEDLQEFLERVKQQDRFRRTSVEAEKEGFFLGRYAINPVTGERIPIYVANYILMEYGTGAIMGVPAHDQRDFSFAKKYGIPIKVVIKPADRDLDPEKMEEAYEGEGIMVNSGPFDGTPSSEGIEKVINWLEEKGIGKRSVQYKLRDWLISRQRYWGAPIPIIYCEKCGVVPVPEEDLPVRLPKDVEFLPTGQSPLSFHEGFKRTKCPICGGEAQRETDTMDTFVDSSWYFLRYVNPHLEDKPFEPDDVNYWLPVDQYIGGVEHAVLHLLYSRFVTKVLHDLGYLNFDEPFTNLFTQGMIYKDGAKMSKSKGNVVSPDEMIEKYGADTLRMYILFMAPPEKDAEWSDAGIEGVHRFIKRLWNTFYTVLPFVKEENTENLVLKNSTEKELRRKLHSIIKKITEDIEGGFKFNTAISGLMELVNHLSQYLNSVPQEEWNRKLLREIVEKLTLALSPFAPHLAEEFWHDLGNDSLVVQQAWPSYDPKALEVEEVEIAIQINGKVRDKVVVPVDISEEALKRIVLERERVKEYVDGKPIRKFIYVKGRIVNIVV</sequence>
<reference key="1">
    <citation type="submission" date="2007-05" db="EMBL/GenBank/DDBJ databases">
        <title>Complete sequence of Thermotoga petrophila RKU-1.</title>
        <authorList>
            <consortium name="US DOE Joint Genome Institute"/>
            <person name="Copeland A."/>
            <person name="Lucas S."/>
            <person name="Lapidus A."/>
            <person name="Barry K."/>
            <person name="Glavina del Rio T."/>
            <person name="Dalin E."/>
            <person name="Tice H."/>
            <person name="Pitluck S."/>
            <person name="Sims D."/>
            <person name="Brettin T."/>
            <person name="Bruce D."/>
            <person name="Detter J.C."/>
            <person name="Han C."/>
            <person name="Tapia R."/>
            <person name="Schmutz J."/>
            <person name="Larimer F."/>
            <person name="Land M."/>
            <person name="Hauser L."/>
            <person name="Kyrpides N."/>
            <person name="Mikhailova N."/>
            <person name="Nelson K."/>
            <person name="Gogarten J.P."/>
            <person name="Noll K."/>
            <person name="Richardson P."/>
        </authorList>
    </citation>
    <scope>NUCLEOTIDE SEQUENCE [LARGE SCALE GENOMIC DNA]</scope>
    <source>
        <strain>ATCC BAA-488 / DSM 13995 / JCM 10881 / RKU-1</strain>
    </source>
</reference>
<dbReference type="EC" id="6.1.1.4" evidence="1"/>
<dbReference type="EMBL" id="CP000702">
    <property type="protein sequence ID" value="ABQ46776.1"/>
    <property type="molecule type" value="Genomic_DNA"/>
</dbReference>
<dbReference type="RefSeq" id="WP_011943352.1">
    <property type="nucleotide sequence ID" value="NC_009486.1"/>
</dbReference>
<dbReference type="SMR" id="A5IKQ3"/>
<dbReference type="STRING" id="390874.Tpet_0757"/>
<dbReference type="KEGG" id="tpt:Tpet_0757"/>
<dbReference type="eggNOG" id="COG0495">
    <property type="taxonomic scope" value="Bacteria"/>
</dbReference>
<dbReference type="HOGENOM" id="CLU_004427_0_0_0"/>
<dbReference type="Proteomes" id="UP000006558">
    <property type="component" value="Chromosome"/>
</dbReference>
<dbReference type="GO" id="GO:0005829">
    <property type="term" value="C:cytosol"/>
    <property type="evidence" value="ECO:0007669"/>
    <property type="project" value="TreeGrafter"/>
</dbReference>
<dbReference type="GO" id="GO:0002161">
    <property type="term" value="F:aminoacyl-tRNA deacylase activity"/>
    <property type="evidence" value="ECO:0007669"/>
    <property type="project" value="InterPro"/>
</dbReference>
<dbReference type="GO" id="GO:0005524">
    <property type="term" value="F:ATP binding"/>
    <property type="evidence" value="ECO:0007669"/>
    <property type="project" value="UniProtKB-UniRule"/>
</dbReference>
<dbReference type="GO" id="GO:0004823">
    <property type="term" value="F:leucine-tRNA ligase activity"/>
    <property type="evidence" value="ECO:0007669"/>
    <property type="project" value="UniProtKB-UniRule"/>
</dbReference>
<dbReference type="GO" id="GO:0006429">
    <property type="term" value="P:leucyl-tRNA aminoacylation"/>
    <property type="evidence" value="ECO:0007669"/>
    <property type="project" value="UniProtKB-UniRule"/>
</dbReference>
<dbReference type="CDD" id="cd07958">
    <property type="entry name" value="Anticodon_Ia_Leu_BEm"/>
    <property type="match status" value="1"/>
</dbReference>
<dbReference type="CDD" id="cd00812">
    <property type="entry name" value="LeuRS_core"/>
    <property type="match status" value="1"/>
</dbReference>
<dbReference type="FunFam" id="3.10.20.590:FF:000001">
    <property type="entry name" value="Leucine--tRNA ligase"/>
    <property type="match status" value="1"/>
</dbReference>
<dbReference type="FunFam" id="3.40.50.620:FF:000003">
    <property type="entry name" value="Leucine--tRNA ligase"/>
    <property type="match status" value="1"/>
</dbReference>
<dbReference type="FunFam" id="3.40.50.620:FF:000212">
    <property type="entry name" value="Leucine--tRNA ligase"/>
    <property type="match status" value="1"/>
</dbReference>
<dbReference type="FunFam" id="1.10.730.10:FF:000011">
    <property type="entry name" value="Leucine--tRNA ligase chloroplastic/mitochondrial"/>
    <property type="match status" value="1"/>
</dbReference>
<dbReference type="Gene3D" id="3.10.20.590">
    <property type="match status" value="1"/>
</dbReference>
<dbReference type="Gene3D" id="3.40.50.620">
    <property type="entry name" value="HUPs"/>
    <property type="match status" value="2"/>
</dbReference>
<dbReference type="Gene3D" id="1.10.730.10">
    <property type="entry name" value="Isoleucyl-tRNA Synthetase, Domain 1"/>
    <property type="match status" value="1"/>
</dbReference>
<dbReference type="HAMAP" id="MF_00049_B">
    <property type="entry name" value="Leu_tRNA_synth_B"/>
    <property type="match status" value="1"/>
</dbReference>
<dbReference type="InterPro" id="IPR001412">
    <property type="entry name" value="aa-tRNA-synth_I_CS"/>
</dbReference>
<dbReference type="InterPro" id="IPR002300">
    <property type="entry name" value="aa-tRNA-synth_Ia"/>
</dbReference>
<dbReference type="InterPro" id="IPR002302">
    <property type="entry name" value="Leu-tRNA-ligase"/>
</dbReference>
<dbReference type="InterPro" id="IPR025709">
    <property type="entry name" value="Leu_tRNA-synth_edit"/>
</dbReference>
<dbReference type="InterPro" id="IPR013155">
    <property type="entry name" value="M/V/L/I-tRNA-synth_anticd-bd"/>
</dbReference>
<dbReference type="InterPro" id="IPR015413">
    <property type="entry name" value="Methionyl/Leucyl_tRNA_Synth"/>
</dbReference>
<dbReference type="InterPro" id="IPR014729">
    <property type="entry name" value="Rossmann-like_a/b/a_fold"/>
</dbReference>
<dbReference type="InterPro" id="IPR009080">
    <property type="entry name" value="tRNAsynth_Ia_anticodon-bd"/>
</dbReference>
<dbReference type="InterPro" id="IPR009008">
    <property type="entry name" value="Val/Leu/Ile-tRNA-synth_edit"/>
</dbReference>
<dbReference type="NCBIfam" id="TIGR00396">
    <property type="entry name" value="leuS_bact"/>
    <property type="match status" value="1"/>
</dbReference>
<dbReference type="PANTHER" id="PTHR43740:SF2">
    <property type="entry name" value="LEUCINE--TRNA LIGASE, MITOCHONDRIAL"/>
    <property type="match status" value="1"/>
</dbReference>
<dbReference type="PANTHER" id="PTHR43740">
    <property type="entry name" value="LEUCYL-TRNA SYNTHETASE"/>
    <property type="match status" value="1"/>
</dbReference>
<dbReference type="Pfam" id="PF08264">
    <property type="entry name" value="Anticodon_1"/>
    <property type="match status" value="1"/>
</dbReference>
<dbReference type="Pfam" id="PF00133">
    <property type="entry name" value="tRNA-synt_1"/>
    <property type="match status" value="1"/>
</dbReference>
<dbReference type="Pfam" id="PF13603">
    <property type="entry name" value="tRNA-synt_1_2"/>
    <property type="match status" value="1"/>
</dbReference>
<dbReference type="Pfam" id="PF09334">
    <property type="entry name" value="tRNA-synt_1g"/>
    <property type="match status" value="1"/>
</dbReference>
<dbReference type="PRINTS" id="PR00985">
    <property type="entry name" value="TRNASYNTHLEU"/>
</dbReference>
<dbReference type="SUPFAM" id="SSF47323">
    <property type="entry name" value="Anticodon-binding domain of a subclass of class I aminoacyl-tRNA synthetases"/>
    <property type="match status" value="1"/>
</dbReference>
<dbReference type="SUPFAM" id="SSF52374">
    <property type="entry name" value="Nucleotidylyl transferase"/>
    <property type="match status" value="1"/>
</dbReference>
<dbReference type="SUPFAM" id="SSF50677">
    <property type="entry name" value="ValRS/IleRS/LeuRS editing domain"/>
    <property type="match status" value="1"/>
</dbReference>
<dbReference type="PROSITE" id="PS00178">
    <property type="entry name" value="AA_TRNA_LIGASE_I"/>
    <property type="match status" value="1"/>
</dbReference>
<accession>A5IKQ3</accession>
<proteinExistence type="inferred from homology"/>
<name>SYL_THEP1</name>
<protein>
    <recommendedName>
        <fullName evidence="1">Leucine--tRNA ligase</fullName>
        <ecNumber evidence="1">6.1.1.4</ecNumber>
    </recommendedName>
    <alternativeName>
        <fullName evidence="1">Leucyl-tRNA synthetase</fullName>
        <shortName evidence="1">LeuRS</shortName>
    </alternativeName>
</protein>
<keyword id="KW-0030">Aminoacyl-tRNA synthetase</keyword>
<keyword id="KW-0067">ATP-binding</keyword>
<keyword id="KW-0963">Cytoplasm</keyword>
<keyword id="KW-0436">Ligase</keyword>
<keyword id="KW-0547">Nucleotide-binding</keyword>
<keyword id="KW-0648">Protein biosynthesis</keyword>
<gene>
    <name evidence="1" type="primary">leuS</name>
    <name type="ordered locus">Tpet_0757</name>
</gene>
<evidence type="ECO:0000255" key="1">
    <source>
        <dbReference type="HAMAP-Rule" id="MF_00049"/>
    </source>
</evidence>
<comment type="catalytic activity">
    <reaction evidence="1">
        <text>tRNA(Leu) + L-leucine + ATP = L-leucyl-tRNA(Leu) + AMP + diphosphate</text>
        <dbReference type="Rhea" id="RHEA:11688"/>
        <dbReference type="Rhea" id="RHEA-COMP:9613"/>
        <dbReference type="Rhea" id="RHEA-COMP:9622"/>
        <dbReference type="ChEBI" id="CHEBI:30616"/>
        <dbReference type="ChEBI" id="CHEBI:33019"/>
        <dbReference type="ChEBI" id="CHEBI:57427"/>
        <dbReference type="ChEBI" id="CHEBI:78442"/>
        <dbReference type="ChEBI" id="CHEBI:78494"/>
        <dbReference type="ChEBI" id="CHEBI:456215"/>
        <dbReference type="EC" id="6.1.1.4"/>
    </reaction>
</comment>
<comment type="subcellular location">
    <subcellularLocation>
        <location evidence="1">Cytoplasm</location>
    </subcellularLocation>
</comment>
<comment type="similarity">
    <text evidence="1">Belongs to the class-I aminoacyl-tRNA synthetase family.</text>
</comment>
<feature type="chain" id="PRO_1000071116" description="Leucine--tRNA ligase">
    <location>
        <begin position="1"/>
        <end position="824"/>
    </location>
</feature>
<feature type="short sequence motif" description="'HIGH' region">
    <location>
        <begin position="41"/>
        <end position="51"/>
    </location>
</feature>
<feature type="short sequence motif" description="'KMSKS' region">
    <location>
        <begin position="580"/>
        <end position="584"/>
    </location>
</feature>
<feature type="binding site" evidence="1">
    <location>
        <position position="583"/>
    </location>
    <ligand>
        <name>ATP</name>
        <dbReference type="ChEBI" id="CHEBI:30616"/>
    </ligand>
</feature>